<keyword id="KW-0349">Heme</keyword>
<keyword id="KW-0408">Iron</keyword>
<keyword id="KW-0479">Metal-binding</keyword>
<keyword id="KW-0561">Oxygen transport</keyword>
<keyword id="KW-0813">Transport</keyword>
<proteinExistence type="inferred from homology"/>
<feature type="initiator methionine" description="Removed" evidence="1">
    <location>
        <position position="1"/>
    </location>
</feature>
<feature type="chain" id="PRO_0000052486" description="Globin, minor">
    <location>
        <begin position="2"/>
        <end position="152"/>
    </location>
</feature>
<feature type="domain" description="Globin" evidence="2">
    <location>
        <begin position="12"/>
        <end position="152"/>
    </location>
</feature>
<feature type="binding site" description="proximal binding residue" evidence="2">
    <location>
        <position position="104"/>
    </location>
    <ligand>
        <name>heme b</name>
        <dbReference type="ChEBI" id="CHEBI:60344"/>
    </ligand>
    <ligandPart>
        <name>Fe</name>
        <dbReference type="ChEBI" id="CHEBI:18248"/>
    </ligandPart>
</feature>
<name>GLBM_ANATR</name>
<protein>
    <recommendedName>
        <fullName>Globin, minor</fullName>
    </recommendedName>
</protein>
<comment type="similarity">
    <text evidence="2">Belongs to the globin family.</text>
</comment>
<dbReference type="EMBL" id="L20699">
    <property type="protein sequence ID" value="AAA72395.1"/>
    <property type="molecule type" value="Genomic_DNA"/>
</dbReference>
<dbReference type="PIR" id="S15895">
    <property type="entry name" value="S15895"/>
</dbReference>
<dbReference type="SMR" id="P25165"/>
<dbReference type="GO" id="GO:0020037">
    <property type="term" value="F:heme binding"/>
    <property type="evidence" value="ECO:0007669"/>
    <property type="project" value="InterPro"/>
</dbReference>
<dbReference type="GO" id="GO:0046872">
    <property type="term" value="F:metal ion binding"/>
    <property type="evidence" value="ECO:0007669"/>
    <property type="project" value="UniProtKB-KW"/>
</dbReference>
<dbReference type="GO" id="GO:0019825">
    <property type="term" value="F:oxygen binding"/>
    <property type="evidence" value="ECO:0007669"/>
    <property type="project" value="InterPro"/>
</dbReference>
<dbReference type="GO" id="GO:0005344">
    <property type="term" value="F:oxygen carrier activity"/>
    <property type="evidence" value="ECO:0007669"/>
    <property type="project" value="UniProtKB-KW"/>
</dbReference>
<dbReference type="CDD" id="cd01040">
    <property type="entry name" value="Mb-like"/>
    <property type="match status" value="1"/>
</dbReference>
<dbReference type="Gene3D" id="1.10.490.10">
    <property type="entry name" value="Globins"/>
    <property type="match status" value="1"/>
</dbReference>
<dbReference type="InterPro" id="IPR000971">
    <property type="entry name" value="Globin"/>
</dbReference>
<dbReference type="InterPro" id="IPR050532">
    <property type="entry name" value="Globin-like_OT"/>
</dbReference>
<dbReference type="InterPro" id="IPR009050">
    <property type="entry name" value="Globin-like_sf"/>
</dbReference>
<dbReference type="InterPro" id="IPR012292">
    <property type="entry name" value="Globin/Proto"/>
</dbReference>
<dbReference type="InterPro" id="IPR044399">
    <property type="entry name" value="Mb-like_M"/>
</dbReference>
<dbReference type="PANTHER" id="PTHR46458">
    <property type="entry name" value="BLR2807 PROTEIN"/>
    <property type="match status" value="1"/>
</dbReference>
<dbReference type="PANTHER" id="PTHR46458:SF1">
    <property type="entry name" value="GEO09476P1"/>
    <property type="match status" value="1"/>
</dbReference>
<dbReference type="Pfam" id="PF00042">
    <property type="entry name" value="Globin"/>
    <property type="match status" value="1"/>
</dbReference>
<dbReference type="SUPFAM" id="SSF46458">
    <property type="entry name" value="Globin-like"/>
    <property type="match status" value="1"/>
</dbReference>
<dbReference type="PROSITE" id="PS01033">
    <property type="entry name" value="GLOBIN"/>
    <property type="match status" value="1"/>
</dbReference>
<reference key="1">
    <citation type="journal article" date="1991" name="Biochim. Biophys. Acta">
        <title>A minor globin gene of the bivalve mollusc Anadara trapezia.</title>
        <authorList>
            <person name="Titchen D.A."/>
            <person name="Glenn W.K."/>
            <person name="Nassif N.T."/>
            <person name="Thompson A.R."/>
            <person name="Thompson E.O.P."/>
        </authorList>
    </citation>
    <scope>NUCLEOTIDE SEQUENCE [GENOMIC DNA]</scope>
    <source>
        <tissue>Blood</tissue>
    </source>
</reference>
<accession>P25165</accession>
<evidence type="ECO:0000250" key="1"/>
<evidence type="ECO:0000255" key="2">
    <source>
        <dbReference type="PROSITE-ProRule" id="PRU00238"/>
    </source>
</evidence>
<sequence>MSTFGELANEVVNNSYHKDLLRLSWGVLSDDMEGTGLMLMANLFNMSPESRLKFGRLGHLSTGRDNSKLRGHSITLMYALKNFVDALDDVDRLKCVVEKFAVNHINRQISAEEFGKIVGPFRAVLRIRMGDYFDEEIVAAWAALIAVVQAAL</sequence>
<organism>
    <name type="scientific">Anadara trapezia</name>
    <name type="common">Sydney cockle</name>
    <name type="synonym">Arca trapezia</name>
    <dbReference type="NCBI Taxonomy" id="6556"/>
    <lineage>
        <taxon>Eukaryota</taxon>
        <taxon>Metazoa</taxon>
        <taxon>Spiralia</taxon>
        <taxon>Lophotrochozoa</taxon>
        <taxon>Mollusca</taxon>
        <taxon>Bivalvia</taxon>
        <taxon>Autobranchia</taxon>
        <taxon>Pteriomorphia</taxon>
        <taxon>Arcoida</taxon>
        <taxon>Arcoidea</taxon>
        <taxon>Arcidae</taxon>
        <taxon>Anadara</taxon>
    </lineage>
</organism>